<feature type="chain" id="PRO_1000048529" description="DNA replication and repair protein RecF">
    <location>
        <begin position="1"/>
        <end position="384"/>
    </location>
</feature>
<feature type="binding site" evidence="1">
    <location>
        <begin position="30"/>
        <end position="37"/>
    </location>
    <ligand>
        <name>ATP</name>
        <dbReference type="ChEBI" id="CHEBI:30616"/>
    </ligand>
</feature>
<name>RECF_LEVBA</name>
<evidence type="ECO:0000255" key="1">
    <source>
        <dbReference type="HAMAP-Rule" id="MF_00365"/>
    </source>
</evidence>
<keyword id="KW-0067">ATP-binding</keyword>
<keyword id="KW-0963">Cytoplasm</keyword>
<keyword id="KW-0227">DNA damage</keyword>
<keyword id="KW-0234">DNA repair</keyword>
<keyword id="KW-0235">DNA replication</keyword>
<keyword id="KW-0238">DNA-binding</keyword>
<keyword id="KW-0547">Nucleotide-binding</keyword>
<keyword id="KW-1185">Reference proteome</keyword>
<keyword id="KW-0742">SOS response</keyword>
<proteinExistence type="inferred from homology"/>
<dbReference type="EMBL" id="CP000416">
    <property type="protein sequence ID" value="ABJ63181.1"/>
    <property type="molecule type" value="Genomic_DNA"/>
</dbReference>
<dbReference type="RefSeq" id="WP_011666819.1">
    <property type="nucleotide sequence ID" value="NC_008497.1"/>
</dbReference>
<dbReference type="SMR" id="Q03UE1"/>
<dbReference type="STRING" id="387344.LVIS_0004"/>
<dbReference type="KEGG" id="lbr:LVIS_0004"/>
<dbReference type="eggNOG" id="COG1195">
    <property type="taxonomic scope" value="Bacteria"/>
</dbReference>
<dbReference type="HOGENOM" id="CLU_040267_0_1_9"/>
<dbReference type="Proteomes" id="UP000001652">
    <property type="component" value="Chromosome"/>
</dbReference>
<dbReference type="GO" id="GO:0005737">
    <property type="term" value="C:cytoplasm"/>
    <property type="evidence" value="ECO:0007669"/>
    <property type="project" value="UniProtKB-SubCell"/>
</dbReference>
<dbReference type="GO" id="GO:0005524">
    <property type="term" value="F:ATP binding"/>
    <property type="evidence" value="ECO:0007669"/>
    <property type="project" value="UniProtKB-UniRule"/>
</dbReference>
<dbReference type="GO" id="GO:0003697">
    <property type="term" value="F:single-stranded DNA binding"/>
    <property type="evidence" value="ECO:0007669"/>
    <property type="project" value="UniProtKB-UniRule"/>
</dbReference>
<dbReference type="GO" id="GO:0006260">
    <property type="term" value="P:DNA replication"/>
    <property type="evidence" value="ECO:0007669"/>
    <property type="project" value="UniProtKB-UniRule"/>
</dbReference>
<dbReference type="GO" id="GO:0000731">
    <property type="term" value="P:DNA synthesis involved in DNA repair"/>
    <property type="evidence" value="ECO:0007669"/>
    <property type="project" value="TreeGrafter"/>
</dbReference>
<dbReference type="GO" id="GO:0006302">
    <property type="term" value="P:double-strand break repair"/>
    <property type="evidence" value="ECO:0007669"/>
    <property type="project" value="TreeGrafter"/>
</dbReference>
<dbReference type="GO" id="GO:0009432">
    <property type="term" value="P:SOS response"/>
    <property type="evidence" value="ECO:0007669"/>
    <property type="project" value="UniProtKB-UniRule"/>
</dbReference>
<dbReference type="CDD" id="cd03242">
    <property type="entry name" value="ABC_RecF"/>
    <property type="match status" value="1"/>
</dbReference>
<dbReference type="FunFam" id="1.20.1050.90:FF:000002">
    <property type="entry name" value="DNA replication and repair protein RecF"/>
    <property type="match status" value="1"/>
</dbReference>
<dbReference type="Gene3D" id="3.40.50.300">
    <property type="entry name" value="P-loop containing nucleotide triphosphate hydrolases"/>
    <property type="match status" value="1"/>
</dbReference>
<dbReference type="Gene3D" id="1.20.1050.90">
    <property type="entry name" value="RecF/RecN/SMC, N-terminal domain"/>
    <property type="match status" value="1"/>
</dbReference>
<dbReference type="HAMAP" id="MF_00365">
    <property type="entry name" value="RecF"/>
    <property type="match status" value="1"/>
</dbReference>
<dbReference type="InterPro" id="IPR001238">
    <property type="entry name" value="DNA-binding_RecF"/>
</dbReference>
<dbReference type="InterPro" id="IPR018078">
    <property type="entry name" value="DNA-binding_RecF_CS"/>
</dbReference>
<dbReference type="InterPro" id="IPR027417">
    <property type="entry name" value="P-loop_NTPase"/>
</dbReference>
<dbReference type="InterPro" id="IPR003395">
    <property type="entry name" value="RecF/RecN/SMC_N"/>
</dbReference>
<dbReference type="InterPro" id="IPR042174">
    <property type="entry name" value="RecF_2"/>
</dbReference>
<dbReference type="NCBIfam" id="TIGR00611">
    <property type="entry name" value="recf"/>
    <property type="match status" value="1"/>
</dbReference>
<dbReference type="PANTHER" id="PTHR32182">
    <property type="entry name" value="DNA REPLICATION AND REPAIR PROTEIN RECF"/>
    <property type="match status" value="1"/>
</dbReference>
<dbReference type="PANTHER" id="PTHR32182:SF0">
    <property type="entry name" value="DNA REPLICATION AND REPAIR PROTEIN RECF"/>
    <property type="match status" value="1"/>
</dbReference>
<dbReference type="Pfam" id="PF02463">
    <property type="entry name" value="SMC_N"/>
    <property type="match status" value="1"/>
</dbReference>
<dbReference type="SUPFAM" id="SSF52540">
    <property type="entry name" value="P-loop containing nucleoside triphosphate hydrolases"/>
    <property type="match status" value="1"/>
</dbReference>
<dbReference type="PROSITE" id="PS00617">
    <property type="entry name" value="RECF_1"/>
    <property type="match status" value="1"/>
</dbReference>
<dbReference type="PROSITE" id="PS00618">
    <property type="entry name" value="RECF_2"/>
    <property type="match status" value="1"/>
</dbReference>
<comment type="function">
    <text evidence="1">The RecF protein is involved in DNA metabolism; it is required for DNA replication and normal SOS inducibility. RecF binds preferentially to single-stranded, linear DNA. It also seems to bind ATP.</text>
</comment>
<comment type="subcellular location">
    <subcellularLocation>
        <location evidence="1">Cytoplasm</location>
    </subcellularLocation>
</comment>
<comment type="similarity">
    <text evidence="1">Belongs to the RecF family.</text>
</comment>
<gene>
    <name evidence="1" type="primary">recF</name>
    <name type="ordered locus">LVIS_0004</name>
</gene>
<protein>
    <recommendedName>
        <fullName evidence="1">DNA replication and repair protein RecF</fullName>
    </recommendedName>
</protein>
<sequence length="384" mass="43184">MYLQELQLQQFRNYPTAKLTFGQGINVLLGENAQGKTNLLEAIYVLALTRSHRTANDHDLVNWQAKTAKVSGRVVKAAGAVPLELTFSRQGKRARVNHLEQARLSQYVGQLNVILFAPEDLAIVKGAPTVRRRFMDMEFGQMNPRYLYNLSQYRTLLKQRNRYLKDLQHKQNKDLLFLSVLSDQLAAFGAEIIAQRLAMLQKLEHWAQAIHGEISQQREELTFHYATQVADDQLTDVPTITAALSALYAKQQDKELYQGTTLVGPHRDDLHFQVNGKNVQTFGSQGQQRTTALSVKLAEIDLMKEETGEYPVLLLDDVLSELDDARQTHLLTAIQDKVQTFITTTSLSGITRQLIKDPTIFHVAEGTVVADAVDSDDPAASKED</sequence>
<organism>
    <name type="scientific">Levilactobacillus brevis (strain ATCC 367 / BCRC 12310 / CIP 105137 / JCM 1170 / LMG 11437 / NCIMB 947 / NCTC 947)</name>
    <name type="common">Lactobacillus brevis</name>
    <dbReference type="NCBI Taxonomy" id="387344"/>
    <lineage>
        <taxon>Bacteria</taxon>
        <taxon>Bacillati</taxon>
        <taxon>Bacillota</taxon>
        <taxon>Bacilli</taxon>
        <taxon>Lactobacillales</taxon>
        <taxon>Lactobacillaceae</taxon>
        <taxon>Levilactobacillus</taxon>
    </lineage>
</organism>
<reference key="1">
    <citation type="journal article" date="2006" name="Proc. Natl. Acad. Sci. U.S.A.">
        <title>Comparative genomics of the lactic acid bacteria.</title>
        <authorList>
            <person name="Makarova K.S."/>
            <person name="Slesarev A."/>
            <person name="Wolf Y.I."/>
            <person name="Sorokin A."/>
            <person name="Mirkin B."/>
            <person name="Koonin E.V."/>
            <person name="Pavlov A."/>
            <person name="Pavlova N."/>
            <person name="Karamychev V."/>
            <person name="Polouchine N."/>
            <person name="Shakhova V."/>
            <person name="Grigoriev I."/>
            <person name="Lou Y."/>
            <person name="Rohksar D."/>
            <person name="Lucas S."/>
            <person name="Huang K."/>
            <person name="Goodstein D.M."/>
            <person name="Hawkins T."/>
            <person name="Plengvidhya V."/>
            <person name="Welker D."/>
            <person name="Hughes J."/>
            <person name="Goh Y."/>
            <person name="Benson A."/>
            <person name="Baldwin K."/>
            <person name="Lee J.-H."/>
            <person name="Diaz-Muniz I."/>
            <person name="Dosti B."/>
            <person name="Smeianov V."/>
            <person name="Wechter W."/>
            <person name="Barabote R."/>
            <person name="Lorca G."/>
            <person name="Altermann E."/>
            <person name="Barrangou R."/>
            <person name="Ganesan B."/>
            <person name="Xie Y."/>
            <person name="Rawsthorne H."/>
            <person name="Tamir D."/>
            <person name="Parker C."/>
            <person name="Breidt F."/>
            <person name="Broadbent J.R."/>
            <person name="Hutkins R."/>
            <person name="O'Sullivan D."/>
            <person name="Steele J."/>
            <person name="Unlu G."/>
            <person name="Saier M.H. Jr."/>
            <person name="Klaenhammer T."/>
            <person name="Richardson P."/>
            <person name="Kozyavkin S."/>
            <person name="Weimer B.C."/>
            <person name="Mills D.A."/>
        </authorList>
    </citation>
    <scope>NUCLEOTIDE SEQUENCE [LARGE SCALE GENOMIC DNA]</scope>
    <source>
        <strain>ATCC 367 / BCRC 12310 / CIP 105137 / JCM 1170 / LMG 11437 / NCIMB 947 / NCTC 947</strain>
    </source>
</reference>
<accession>Q03UE1</accession>